<protein>
    <recommendedName>
        <fullName evidence="9">Receptor-type guanylate cyclase gcy-6</fullName>
        <ecNumber evidence="1">4.6.1.2</ecNumber>
    </recommendedName>
</protein>
<feature type="signal peptide" evidence="2">
    <location>
        <begin position="1"/>
        <end position="21"/>
    </location>
</feature>
<feature type="chain" id="PRO_0000433275" description="Receptor-type guanylate cyclase gcy-6" evidence="2">
    <location>
        <begin position="22"/>
        <end position="1086"/>
    </location>
</feature>
<feature type="topological domain" description="Extracellular" evidence="2">
    <location>
        <begin position="22"/>
        <end position="487"/>
    </location>
</feature>
<feature type="transmembrane region" description="Helical" evidence="2">
    <location>
        <begin position="488"/>
        <end position="508"/>
    </location>
</feature>
<feature type="topological domain" description="Cytoplasmic" evidence="2">
    <location>
        <begin position="509"/>
        <end position="1086"/>
    </location>
</feature>
<feature type="domain" description="Protein kinase" evidence="4">
    <location>
        <begin position="560"/>
        <end position="836"/>
    </location>
</feature>
<feature type="domain" description="Guanylate cyclase" evidence="3">
    <location>
        <begin position="894"/>
        <end position="1024"/>
    </location>
</feature>
<feature type="binding site" evidence="4">
    <location>
        <begin position="566"/>
        <end position="574"/>
    </location>
    <ligand>
        <name>ATP</name>
        <dbReference type="ChEBI" id="CHEBI:30616"/>
    </ligand>
</feature>
<feature type="binding site" evidence="4">
    <location>
        <position position="589"/>
    </location>
    <ligand>
        <name>ATP</name>
        <dbReference type="ChEBI" id="CHEBI:30616"/>
    </ligand>
</feature>
<feature type="glycosylation site" description="N-linked (GlcNAc...) asparagine" evidence="5">
    <location>
        <position position="325"/>
    </location>
</feature>
<feature type="glycosylation site" description="N-linked (GlcNAc...) asparagine" evidence="5">
    <location>
        <position position="343"/>
    </location>
</feature>
<feature type="glycosylation site" description="N-linked (GlcNAc...) asparagine" evidence="5">
    <location>
        <position position="387"/>
    </location>
</feature>
<feature type="glycosylation site" description="N-linked (GlcNAc...) asparagine" evidence="5">
    <location>
        <position position="427"/>
    </location>
</feature>
<feature type="splice variant" id="VSP_057699" description="In isoform b." evidence="9">
    <location>
        <begin position="37"/>
        <end position="40"/>
    </location>
</feature>
<reference evidence="10" key="1">
    <citation type="journal article" date="1998" name="Science">
        <title>Genome sequence of the nematode C. elegans: a platform for investigating biology.</title>
        <authorList>
            <consortium name="The C. elegans sequencing consortium"/>
        </authorList>
    </citation>
    <scope>NUCLEOTIDE SEQUENCE [LARGE SCALE GENOMIC DNA]</scope>
    <source>
        <strain evidence="10">Bristol N2</strain>
    </source>
</reference>
<reference evidence="9" key="2">
    <citation type="journal article" date="1997" name="Proc. Natl. Acad. Sci. U.S.A.">
        <title>Guanylyl cyclase expression in specific sensory neurons: a new family of chemosensory receptors.</title>
        <authorList>
            <person name="Yu S."/>
            <person name="Avery L."/>
            <person name="Baude E."/>
            <person name="Garbers D.L."/>
        </authorList>
    </citation>
    <scope>TISSUE SPECIFICITY</scope>
</reference>
<reference evidence="9" key="3">
    <citation type="journal article" date="2005" name="Proc. Natl. Acad. Sci. U.S.A.">
        <title>MicroRNAs acting in a double-negative feedback loop to control a neuronal cell fate decision.</title>
        <authorList>
            <person name="Johnston R.J. Jr."/>
            <person name="Chang S."/>
            <person name="Etchberger J.F."/>
            <person name="Ortiz C.O."/>
            <person name="Hobert O."/>
        </authorList>
    </citation>
    <scope>TISSUE SPECIFICITY</scope>
</reference>
<reference evidence="9" key="4">
    <citation type="journal article" date="2009" name="Curr. Biol.">
        <title>Lateralized gustatory behavior of C. elegans is controlled by specific receptor-type guanylyl cyclases.</title>
        <authorList>
            <person name="Ortiz C.O."/>
            <person name="Faumont S."/>
            <person name="Takayama J."/>
            <person name="Ahmed H.K."/>
            <person name="Goldsmith A.D."/>
            <person name="Pocock R."/>
            <person name="McCormick K.E."/>
            <person name="Kunimoto H."/>
            <person name="Iino Y."/>
            <person name="Lockery S."/>
            <person name="Hobert O."/>
        </authorList>
    </citation>
    <scope>FUNCTION</scope>
</reference>
<comment type="function">
    <text evidence="1 7">Guanylate cyclase involved in the production of the second messenger cGMP (By similarity). Regulates chemotaxis responses toward the salt ion Mg(2+) and to a lesser extent toward Cl(1-) in ASE left (ASEL) sensory neuron (PubMed:19523832).</text>
</comment>
<comment type="catalytic activity">
    <reaction evidence="1">
        <text>GTP = 3',5'-cyclic GMP + diphosphate</text>
        <dbReference type="Rhea" id="RHEA:13665"/>
        <dbReference type="ChEBI" id="CHEBI:33019"/>
        <dbReference type="ChEBI" id="CHEBI:37565"/>
        <dbReference type="ChEBI" id="CHEBI:57746"/>
        <dbReference type="EC" id="4.6.1.2"/>
    </reaction>
</comment>
<comment type="subcellular location">
    <subcellularLocation>
        <location evidence="9">Cell membrane</location>
        <topology evidence="9">Single-pass type I membrane protein</topology>
    </subcellularLocation>
</comment>
<comment type="alternative products">
    <event type="alternative splicing"/>
    <isoform>
        <id>N1NVB7-1</id>
        <name evidence="11">a</name>
        <sequence type="displayed"/>
    </isoform>
    <isoform>
        <id>N1NVB7-2</id>
        <name evidence="12">b</name>
        <sequence type="described" ref="VSP_057699"/>
    </isoform>
</comment>
<comment type="tissue specificity">
    <text evidence="6 8">Expressed in both ASEL and ASER neurons throughout late embryonic and early larval stages. In adults, expressed asymmetrically in ASE left (ASEL) sensory neuron.</text>
</comment>
<comment type="domain">
    <text evidence="4">The protein kinase domain is predicted to be catalytically inactive.</text>
</comment>
<comment type="similarity">
    <text evidence="3">Belongs to the adenylyl cyclase class-4/guanylyl cyclase family.</text>
</comment>
<dbReference type="EC" id="4.6.1.2" evidence="1"/>
<dbReference type="EMBL" id="BX284605">
    <property type="protein sequence ID" value="CAA94879.4"/>
    <property type="molecule type" value="Genomic_DNA"/>
</dbReference>
<dbReference type="EMBL" id="BX284605">
    <property type="protein sequence ID" value="CCW45984.1"/>
    <property type="molecule type" value="Genomic_DNA"/>
</dbReference>
<dbReference type="RefSeq" id="NP_001294696.1">
    <molecule id="N1NVB7-1"/>
    <property type="nucleotide sequence ID" value="NM_001307767.1"/>
</dbReference>
<dbReference type="RefSeq" id="NP_505650.3">
    <molecule id="N1NVB7-2"/>
    <property type="nucleotide sequence ID" value="NM_073249.3"/>
</dbReference>
<dbReference type="SMR" id="N1NVB7"/>
<dbReference type="FunCoup" id="N1NVB7">
    <property type="interactions" value="71"/>
</dbReference>
<dbReference type="STRING" id="6239.B0024.6b.1"/>
<dbReference type="GlyCosmos" id="N1NVB7">
    <property type="glycosylation" value="4 sites, No reported glycans"/>
</dbReference>
<dbReference type="PaxDb" id="6239-B0024.6b"/>
<dbReference type="EnsemblMetazoa" id="B0024.6a.1">
    <molecule id="N1NVB7-2"/>
    <property type="protein sequence ID" value="B0024.6a.1"/>
    <property type="gene ID" value="WBGene00001533"/>
</dbReference>
<dbReference type="EnsemblMetazoa" id="B0024.6b.1">
    <molecule id="N1NVB7-1"/>
    <property type="protein sequence ID" value="B0024.6b.1"/>
    <property type="gene ID" value="WBGene00001533"/>
</dbReference>
<dbReference type="GeneID" id="191644"/>
<dbReference type="KEGG" id="cel:CELE_B0024.6"/>
<dbReference type="AGR" id="WB:WBGene00001533"/>
<dbReference type="CTD" id="191644"/>
<dbReference type="WormBase" id="B0024.6a">
    <molecule id="N1NVB7-2"/>
    <property type="protein sequence ID" value="CE47853"/>
    <property type="gene ID" value="WBGene00001533"/>
    <property type="gene designation" value="gcy-6"/>
</dbReference>
<dbReference type="WormBase" id="B0024.6b">
    <molecule id="N1NVB7-1"/>
    <property type="protein sequence ID" value="CE46160"/>
    <property type="gene ID" value="WBGene00001533"/>
    <property type="gene designation" value="gcy-6"/>
</dbReference>
<dbReference type="eggNOG" id="KOG1023">
    <property type="taxonomic scope" value="Eukaryota"/>
</dbReference>
<dbReference type="InParanoid" id="N1NVB7"/>
<dbReference type="OMA" id="GFLHCDV"/>
<dbReference type="OrthoDB" id="1890790at2759"/>
<dbReference type="Reactome" id="R-CEL-2514859">
    <property type="pathway name" value="Inactivation, recovery and regulation of the phototransduction cascade"/>
</dbReference>
<dbReference type="PRO" id="PR:N1NVB7"/>
<dbReference type="Proteomes" id="UP000001940">
    <property type="component" value="Chromosome V"/>
</dbReference>
<dbReference type="GO" id="GO:0005886">
    <property type="term" value="C:plasma membrane"/>
    <property type="evidence" value="ECO:0000318"/>
    <property type="project" value="GO_Central"/>
</dbReference>
<dbReference type="GO" id="GO:0005524">
    <property type="term" value="F:ATP binding"/>
    <property type="evidence" value="ECO:0007669"/>
    <property type="project" value="UniProtKB-KW"/>
</dbReference>
<dbReference type="GO" id="GO:0005525">
    <property type="term" value="F:GTP binding"/>
    <property type="evidence" value="ECO:0007669"/>
    <property type="project" value="UniProtKB-KW"/>
</dbReference>
<dbReference type="GO" id="GO:0004383">
    <property type="term" value="F:guanylate cyclase activity"/>
    <property type="evidence" value="ECO:0000318"/>
    <property type="project" value="GO_Central"/>
</dbReference>
<dbReference type="GO" id="GO:0001653">
    <property type="term" value="F:peptide receptor activity"/>
    <property type="evidence" value="ECO:0000318"/>
    <property type="project" value="GO_Central"/>
</dbReference>
<dbReference type="GO" id="GO:0004672">
    <property type="term" value="F:protein kinase activity"/>
    <property type="evidence" value="ECO:0007669"/>
    <property type="project" value="InterPro"/>
</dbReference>
<dbReference type="GO" id="GO:0006182">
    <property type="term" value="P:cGMP biosynthetic process"/>
    <property type="evidence" value="ECO:0000318"/>
    <property type="project" value="GO_Central"/>
</dbReference>
<dbReference type="GO" id="GO:0007635">
    <property type="term" value="P:chemosensory behavior"/>
    <property type="evidence" value="ECO:0000315"/>
    <property type="project" value="UniProtKB"/>
</dbReference>
<dbReference type="GO" id="GO:0006935">
    <property type="term" value="P:chemotaxis"/>
    <property type="evidence" value="ECO:0000315"/>
    <property type="project" value="UniProtKB"/>
</dbReference>
<dbReference type="GO" id="GO:0035556">
    <property type="term" value="P:intracellular signal transduction"/>
    <property type="evidence" value="ECO:0007669"/>
    <property type="project" value="InterPro"/>
</dbReference>
<dbReference type="GO" id="GO:0050850">
    <property type="term" value="P:positive regulation of calcium-mediated signaling"/>
    <property type="evidence" value="ECO:0000315"/>
    <property type="project" value="UniProtKB"/>
</dbReference>
<dbReference type="GO" id="GO:0007168">
    <property type="term" value="P:receptor guanylyl cyclase signaling pathway"/>
    <property type="evidence" value="ECO:0000318"/>
    <property type="project" value="GO_Central"/>
</dbReference>
<dbReference type="GO" id="GO:0032026">
    <property type="term" value="P:response to magnesium ion"/>
    <property type="evidence" value="ECO:0000315"/>
    <property type="project" value="UniProtKB"/>
</dbReference>
<dbReference type="GO" id="GO:1902074">
    <property type="term" value="P:response to salt"/>
    <property type="evidence" value="ECO:0000315"/>
    <property type="project" value="UniProtKB"/>
</dbReference>
<dbReference type="CDD" id="cd07302">
    <property type="entry name" value="CHD"/>
    <property type="match status" value="1"/>
</dbReference>
<dbReference type="CDD" id="cd06352">
    <property type="entry name" value="PBP1_NPR_GC-like"/>
    <property type="match status" value="1"/>
</dbReference>
<dbReference type="FunFam" id="1.10.510.10:FF:000704">
    <property type="entry name" value="Guanylate cyclase"/>
    <property type="match status" value="1"/>
</dbReference>
<dbReference type="FunFam" id="3.30.70.1230:FF:000023">
    <property type="entry name" value="Guanylate cyclase"/>
    <property type="match status" value="1"/>
</dbReference>
<dbReference type="FunFam" id="3.40.50.2300:FF:000241">
    <property type="entry name" value="Guanylate cyclase"/>
    <property type="match status" value="1"/>
</dbReference>
<dbReference type="FunFam" id="3.40.50.2300:FF:000428">
    <property type="entry name" value="Guanylate cyclase"/>
    <property type="match status" value="1"/>
</dbReference>
<dbReference type="Gene3D" id="3.40.50.2300">
    <property type="match status" value="2"/>
</dbReference>
<dbReference type="Gene3D" id="3.30.70.1230">
    <property type="entry name" value="Nucleotide cyclase"/>
    <property type="match status" value="1"/>
</dbReference>
<dbReference type="Gene3D" id="1.10.510.10">
    <property type="entry name" value="Transferase(Phosphotransferase) domain 1"/>
    <property type="match status" value="1"/>
</dbReference>
<dbReference type="InterPro" id="IPR001054">
    <property type="entry name" value="A/G_cyclase"/>
</dbReference>
<dbReference type="InterPro" id="IPR018297">
    <property type="entry name" value="A/G_cyclase_CS"/>
</dbReference>
<dbReference type="InterPro" id="IPR001828">
    <property type="entry name" value="ANF_lig-bd_rcpt"/>
</dbReference>
<dbReference type="InterPro" id="IPR050401">
    <property type="entry name" value="Cyclic_nucleotide_synthase"/>
</dbReference>
<dbReference type="InterPro" id="IPR011645">
    <property type="entry name" value="HNOB_dom_associated"/>
</dbReference>
<dbReference type="InterPro" id="IPR011009">
    <property type="entry name" value="Kinase-like_dom_sf"/>
</dbReference>
<dbReference type="InterPro" id="IPR029787">
    <property type="entry name" value="Nucleotide_cyclase"/>
</dbReference>
<dbReference type="InterPro" id="IPR028082">
    <property type="entry name" value="Peripla_BP_I"/>
</dbReference>
<dbReference type="InterPro" id="IPR000719">
    <property type="entry name" value="Prot_kinase_dom"/>
</dbReference>
<dbReference type="InterPro" id="IPR001245">
    <property type="entry name" value="Ser-Thr/Tyr_kinase_cat_dom"/>
</dbReference>
<dbReference type="PANTHER" id="PTHR11920">
    <property type="entry name" value="GUANYLYL CYCLASE"/>
    <property type="match status" value="1"/>
</dbReference>
<dbReference type="PANTHER" id="PTHR11920:SF76">
    <property type="entry name" value="RECEPTOR-TYPE GUANYLATE CYCLASE GCY-6"/>
    <property type="match status" value="1"/>
</dbReference>
<dbReference type="Pfam" id="PF01094">
    <property type="entry name" value="ANF_receptor"/>
    <property type="match status" value="1"/>
</dbReference>
<dbReference type="Pfam" id="PF00211">
    <property type="entry name" value="Guanylate_cyc"/>
    <property type="match status" value="1"/>
</dbReference>
<dbReference type="Pfam" id="PF07701">
    <property type="entry name" value="HNOBA"/>
    <property type="match status" value="1"/>
</dbReference>
<dbReference type="Pfam" id="PF07714">
    <property type="entry name" value="PK_Tyr_Ser-Thr"/>
    <property type="match status" value="1"/>
</dbReference>
<dbReference type="SMART" id="SM00044">
    <property type="entry name" value="CYCc"/>
    <property type="match status" value="1"/>
</dbReference>
<dbReference type="SUPFAM" id="SSF55073">
    <property type="entry name" value="Nucleotide cyclase"/>
    <property type="match status" value="1"/>
</dbReference>
<dbReference type="SUPFAM" id="SSF53822">
    <property type="entry name" value="Periplasmic binding protein-like I"/>
    <property type="match status" value="1"/>
</dbReference>
<dbReference type="SUPFAM" id="SSF56112">
    <property type="entry name" value="Protein kinase-like (PK-like)"/>
    <property type="match status" value="1"/>
</dbReference>
<dbReference type="PROSITE" id="PS00452">
    <property type="entry name" value="GUANYLATE_CYCLASE_1"/>
    <property type="match status" value="1"/>
</dbReference>
<dbReference type="PROSITE" id="PS50125">
    <property type="entry name" value="GUANYLATE_CYCLASE_2"/>
    <property type="match status" value="1"/>
</dbReference>
<dbReference type="PROSITE" id="PS50011">
    <property type="entry name" value="PROTEIN_KINASE_DOM"/>
    <property type="match status" value="1"/>
</dbReference>
<name>GCY6_CAEEL</name>
<gene>
    <name evidence="12" type="primary">gcy-6</name>
    <name evidence="12" type="ORF">B0024.6</name>
</gene>
<sequence length="1086" mass="122390">MIGVYLRSVIFPLLFVIQTICQPPGNVFHLGFLHCDVLENNVEGSTTYINYRTSASAASIAIDKIKREGLLLGYDFKFTILYDQCDENIAAGNAIKLFAEHNVDVLFGPTTNNAAMPVFILATYYNIPLITWGITSSATLDDESRFPTAGMLSIGSRSLAVTFREVMKEYGWDQFVFAYSLEMNDEKCETLRDDFQNMVAYYGDIVLSYAVQIMDHSEEGLLAILKDVSTRGRIIVPCFHEGNSRGLHRRWMLVAARNGFVNDEYVYIFPSLRSRGYAVPQADGTFRYPWTEATGPQPGDQEALLGFQKSIFIVDMQGQGNVGSNYTQFEHEIIQRMKEPPYNCTDACASPEYQTAATYAGQLHDSVYIYGVVMDQIMKTVPNQYKNGTAFPRKMAGVFNGVGGTVAIDEGGGLQPTLFVLTLDSNNNSSLIMTVDVDQQEAVVTKHYTNEATALWSHRKGIRPPDQPICGYTGSLCPANVFFQYIGWFIAAIIIIFFTIMGAILAFIYLCHAKQQEVERQNALWQIPFKSMMTVTKKGKGEHSMRSISSVPSTISSTRSSTLSEVGETRNYLFFQIQNDVEMERVAAKKHSIRMVFDNKTCATMRQMRLIDHANLNKFIGMSLDAPQLYSVWRFCSRGSLADVIRKASMQMDGFFIYSLMKDIINGLTWIHESSHEFHGMLTSKNCLLNDRWQLKITDFGLRIFRTHDQYNKSDRLWTSPELLRTDDILGSREGDIYSFGIISAELITRSSVFDLENRKEDAEEIIYMLKKGGLQSPRPSLEHDESIEINPALLHLVRDCWTERPSERPDIKQVASQLRSMNTNRNDNLMDHVFNVLESYASTLEDEVAERMKELVEEKKKSDVLLYRMLPRQVADKLKLGQTVEPETFDIVTLFFSDVVSFTTLAGKCTPLQVVNLLNGLYTIFDGIIEQHDVYKVETIGDGYFVASGVPRRNGNEHTRNIASMSINFVKSLADFSIPHLPGEKIKIRVGFHCGSVVAGVVGLTMPRYCLFGDAVNTASRMESNSKPGQIHLSEEANQMLMRLGGFTTEPRGEVIIKGKGVMATYWLLKMDESAAPKILKKKQD</sequence>
<evidence type="ECO:0000250" key="1">
    <source>
        <dbReference type="UniProtKB" id="Q19187"/>
    </source>
</evidence>
<evidence type="ECO:0000255" key="2"/>
<evidence type="ECO:0000255" key="3">
    <source>
        <dbReference type="PROSITE-ProRule" id="PRU00099"/>
    </source>
</evidence>
<evidence type="ECO:0000255" key="4">
    <source>
        <dbReference type="PROSITE-ProRule" id="PRU00159"/>
    </source>
</evidence>
<evidence type="ECO:0000255" key="5">
    <source>
        <dbReference type="PROSITE-ProRule" id="PRU00498"/>
    </source>
</evidence>
<evidence type="ECO:0000269" key="6">
    <source>
    </source>
</evidence>
<evidence type="ECO:0000269" key="7">
    <source>
    </source>
</evidence>
<evidence type="ECO:0000269" key="8">
    <source>
    </source>
</evidence>
<evidence type="ECO:0000305" key="9"/>
<evidence type="ECO:0000312" key="10">
    <source>
        <dbReference type="Proteomes" id="UP000001940"/>
    </source>
</evidence>
<evidence type="ECO:0000312" key="11">
    <source>
        <dbReference type="WormBase" id="B0024.6a"/>
    </source>
</evidence>
<evidence type="ECO:0000312" key="12">
    <source>
        <dbReference type="WormBase" id="B0024.6b"/>
    </source>
</evidence>
<organism evidence="10">
    <name type="scientific">Caenorhabditis elegans</name>
    <dbReference type="NCBI Taxonomy" id="6239"/>
    <lineage>
        <taxon>Eukaryota</taxon>
        <taxon>Metazoa</taxon>
        <taxon>Ecdysozoa</taxon>
        <taxon>Nematoda</taxon>
        <taxon>Chromadorea</taxon>
        <taxon>Rhabditida</taxon>
        <taxon>Rhabditina</taxon>
        <taxon>Rhabditomorpha</taxon>
        <taxon>Rhabditoidea</taxon>
        <taxon>Rhabditidae</taxon>
        <taxon>Peloderinae</taxon>
        <taxon>Caenorhabditis</taxon>
    </lineage>
</organism>
<keyword id="KW-0025">Alternative splicing</keyword>
<keyword id="KW-0067">ATP-binding</keyword>
<keyword id="KW-1003">Cell membrane</keyword>
<keyword id="KW-0141">cGMP biosynthesis</keyword>
<keyword id="KW-0145">Chemotaxis</keyword>
<keyword id="KW-0325">Glycoprotein</keyword>
<keyword id="KW-0342">GTP-binding</keyword>
<keyword id="KW-0456">Lyase</keyword>
<keyword id="KW-0472">Membrane</keyword>
<keyword id="KW-0547">Nucleotide-binding</keyword>
<keyword id="KW-0675">Receptor</keyword>
<keyword id="KW-1185">Reference proteome</keyword>
<keyword id="KW-0732">Signal</keyword>
<keyword id="KW-0812">Transmembrane</keyword>
<keyword id="KW-1133">Transmembrane helix</keyword>
<proteinExistence type="evidence at transcript level"/>
<accession>N1NVB7</accession>
<accession>Q9XVV4</accession>